<sequence>MNTKILKALEFDKVKKQFTHFLQSEQGQMELNDLLPMTNQEKIERSFAEIADVAQIFQEYASFGFGHSQDISESLRRLELGADLNTQELLAVKRILQMSAELKDFYDNLENVDLQILDCLFEKIETFPDLQGSLQAINDGGFIEDFASPELTKIRHHIHQNEQQIRQILQEMLKKQGDLLAENLIASRSGRSVLPVKNTYRHRIAGVIHDISASGNTVYIEPRAVVNLNEEMTQARADERHEMTRILHDLSDRLRSQTDIIGNNAWLLGHIDFVRGKYLYMRENQASLPSLTTDQTIRLLSVRHPLLSNPIANDLHFEHDTTAILITGPNTGGKTIMLKTLGITQLMAQSGLPILADEGSKVAVFKDIFADIGDEQSIEQSLSTFSSHMTHIVEILQKANKDSLVLFDELGAGTDPQEGAALAMSILEHLRLSDIKTMITTHYPELKAYGIETEFIENASMEFDMVTLSPTYHFMQGVPGRSNAFEIARRLGLSEIIVAEAENLTNTDSDVNKIIERLENQTIESRRRLDNIREVEQENLKFNRAVKKLYNEFSHAQDKELRKAKLKAQEIVDKALAESDFILKNLQDKAQLKPHEIIEAKGKLKKLVPEIELSKNKVLKKAKKKRAAKVGDDIIVSSYGQRGTLTKRFKDGRWEAQVGLIKMTLQESEFDLVKSDKAQASQKRQAHLVKRTSQKAPSARLDLRGKRYEEAMQELDEFIDQALLNNMAQVDIIHGIGTGVIRDGVTKYLRRNKQVKEFGYAPQNAGGSGATIVTFK</sequence>
<comment type="function">
    <text evidence="1">Endonuclease that is involved in the suppression of homologous recombination and thus may have a key role in the control of bacterial genetic diversity.</text>
</comment>
<comment type="function">
    <text evidence="1">Acts as a ribosome collision sensor, splitting the ribosome into its 2 subunits. Detects stalled/collided 70S ribosomes which it binds and splits by an ATP-hydrolysis driven conformational change. Acts upstream of the ribosome quality control system (RQC), a ribosome-associated complex that mediates the extraction of incompletely synthesized nascent chains from stalled ribosomes and their subsequent degradation. Probably generates substrates for RQC.</text>
</comment>
<comment type="subunit">
    <text evidence="1">Homodimer. Binds to stalled ribosomes, contacting rRNA.</text>
</comment>
<comment type="similarity">
    <text evidence="1">Belongs to the DNA mismatch repair MutS family. MutS2 subfamily.</text>
</comment>
<keyword id="KW-0067">ATP-binding</keyword>
<keyword id="KW-0238">DNA-binding</keyword>
<keyword id="KW-0255">Endonuclease</keyword>
<keyword id="KW-0378">Hydrolase</keyword>
<keyword id="KW-0540">Nuclease</keyword>
<keyword id="KW-0547">Nucleotide-binding</keyword>
<keyword id="KW-1185">Reference proteome</keyword>
<keyword id="KW-0694">RNA-binding</keyword>
<keyword id="KW-0699">rRNA-binding</keyword>
<evidence type="ECO:0000255" key="1">
    <source>
        <dbReference type="HAMAP-Rule" id="MF_00092"/>
    </source>
</evidence>
<organism>
    <name type="scientific">Streptococcus mutans serotype c (strain ATCC 700610 / UA159)</name>
    <dbReference type="NCBI Taxonomy" id="210007"/>
    <lineage>
        <taxon>Bacteria</taxon>
        <taxon>Bacillati</taxon>
        <taxon>Bacillota</taxon>
        <taxon>Bacilli</taxon>
        <taxon>Lactobacillales</taxon>
        <taxon>Streptococcaceae</taxon>
        <taxon>Streptococcus</taxon>
    </lineage>
</organism>
<feature type="chain" id="PRO_1000093391" description="Endonuclease MutS2">
    <location>
        <begin position="1"/>
        <end position="776"/>
    </location>
</feature>
<feature type="domain" description="Smr" evidence="1">
    <location>
        <begin position="701"/>
        <end position="776"/>
    </location>
</feature>
<feature type="binding site" evidence="1">
    <location>
        <begin position="328"/>
        <end position="335"/>
    </location>
    <ligand>
        <name>ATP</name>
        <dbReference type="ChEBI" id="CHEBI:30616"/>
    </ligand>
</feature>
<gene>
    <name evidence="1" type="primary">mutS2</name>
    <name evidence="1" type="synonym">rqcU</name>
    <name type="ordered locus">SMU_1870</name>
</gene>
<accession>Q8DSD1</accession>
<name>MUTS2_STRMU</name>
<proteinExistence type="inferred from homology"/>
<reference key="1">
    <citation type="journal article" date="2002" name="Proc. Natl. Acad. Sci. U.S.A.">
        <title>Genome sequence of Streptococcus mutans UA159, a cariogenic dental pathogen.</title>
        <authorList>
            <person name="Ajdic D.J."/>
            <person name="McShan W.M."/>
            <person name="McLaughlin R.E."/>
            <person name="Savic G."/>
            <person name="Chang J."/>
            <person name="Carson M.B."/>
            <person name="Primeaux C."/>
            <person name="Tian R."/>
            <person name="Kenton S."/>
            <person name="Jia H.G."/>
            <person name="Lin S.P."/>
            <person name="Qian Y."/>
            <person name="Li S."/>
            <person name="Zhu H."/>
            <person name="Najar F.Z."/>
            <person name="Lai H."/>
            <person name="White J."/>
            <person name="Roe B.A."/>
            <person name="Ferretti J.J."/>
        </authorList>
    </citation>
    <scope>NUCLEOTIDE SEQUENCE [LARGE SCALE GENOMIC DNA]</scope>
    <source>
        <strain>ATCC 700610 / UA159</strain>
    </source>
</reference>
<protein>
    <recommendedName>
        <fullName evidence="1">Endonuclease MutS2</fullName>
        <ecNumber evidence="1">3.1.-.-</ecNumber>
    </recommendedName>
    <alternativeName>
        <fullName evidence="1">Ribosome-associated protein quality control-upstream factor</fullName>
        <shortName evidence="1">RQC-upstream factor</shortName>
        <shortName evidence="1">RqcU</shortName>
        <ecNumber evidence="1">3.6.4.-</ecNumber>
    </alternativeName>
</protein>
<dbReference type="EC" id="3.1.-.-" evidence="1"/>
<dbReference type="EC" id="3.6.4.-" evidence="1"/>
<dbReference type="EMBL" id="AE014133">
    <property type="protein sequence ID" value="AAN59487.1"/>
    <property type="molecule type" value="Genomic_DNA"/>
</dbReference>
<dbReference type="RefSeq" id="NP_722181.1">
    <property type="nucleotide sequence ID" value="NC_004350.2"/>
</dbReference>
<dbReference type="RefSeq" id="WP_002263362.1">
    <property type="nucleotide sequence ID" value="NC_004350.2"/>
</dbReference>
<dbReference type="SMR" id="Q8DSD1"/>
<dbReference type="STRING" id="210007.SMU_1870"/>
<dbReference type="KEGG" id="smu:SMU_1870"/>
<dbReference type="PATRIC" id="fig|210007.7.peg.1666"/>
<dbReference type="eggNOG" id="COG1193">
    <property type="taxonomic scope" value="Bacteria"/>
</dbReference>
<dbReference type="HOGENOM" id="CLU_011252_2_1_9"/>
<dbReference type="OrthoDB" id="9808166at2"/>
<dbReference type="PhylomeDB" id="Q8DSD1"/>
<dbReference type="Proteomes" id="UP000002512">
    <property type="component" value="Chromosome"/>
</dbReference>
<dbReference type="GO" id="GO:0005524">
    <property type="term" value="F:ATP binding"/>
    <property type="evidence" value="ECO:0007669"/>
    <property type="project" value="UniProtKB-UniRule"/>
</dbReference>
<dbReference type="GO" id="GO:0016887">
    <property type="term" value="F:ATP hydrolysis activity"/>
    <property type="evidence" value="ECO:0007669"/>
    <property type="project" value="InterPro"/>
</dbReference>
<dbReference type="GO" id="GO:0140664">
    <property type="term" value="F:ATP-dependent DNA damage sensor activity"/>
    <property type="evidence" value="ECO:0007669"/>
    <property type="project" value="InterPro"/>
</dbReference>
<dbReference type="GO" id="GO:0004519">
    <property type="term" value="F:endonuclease activity"/>
    <property type="evidence" value="ECO:0007669"/>
    <property type="project" value="UniProtKB-UniRule"/>
</dbReference>
<dbReference type="GO" id="GO:0030983">
    <property type="term" value="F:mismatched DNA binding"/>
    <property type="evidence" value="ECO:0007669"/>
    <property type="project" value="InterPro"/>
</dbReference>
<dbReference type="GO" id="GO:0043023">
    <property type="term" value="F:ribosomal large subunit binding"/>
    <property type="evidence" value="ECO:0007669"/>
    <property type="project" value="UniProtKB-UniRule"/>
</dbReference>
<dbReference type="GO" id="GO:0019843">
    <property type="term" value="F:rRNA binding"/>
    <property type="evidence" value="ECO:0007669"/>
    <property type="project" value="UniProtKB-UniRule"/>
</dbReference>
<dbReference type="GO" id="GO:0006298">
    <property type="term" value="P:mismatch repair"/>
    <property type="evidence" value="ECO:0007669"/>
    <property type="project" value="InterPro"/>
</dbReference>
<dbReference type="GO" id="GO:0045910">
    <property type="term" value="P:negative regulation of DNA recombination"/>
    <property type="evidence" value="ECO:0007669"/>
    <property type="project" value="InterPro"/>
</dbReference>
<dbReference type="GO" id="GO:0072344">
    <property type="term" value="P:rescue of stalled ribosome"/>
    <property type="evidence" value="ECO:0007669"/>
    <property type="project" value="UniProtKB-UniRule"/>
</dbReference>
<dbReference type="CDD" id="cd03280">
    <property type="entry name" value="ABC_MutS2"/>
    <property type="match status" value="1"/>
</dbReference>
<dbReference type="FunFam" id="3.40.50.300:FF:000830">
    <property type="entry name" value="Endonuclease MutS2"/>
    <property type="match status" value="1"/>
</dbReference>
<dbReference type="Gene3D" id="3.30.1370.110">
    <property type="match status" value="1"/>
</dbReference>
<dbReference type="Gene3D" id="3.40.50.300">
    <property type="entry name" value="P-loop containing nucleotide triphosphate hydrolases"/>
    <property type="match status" value="1"/>
</dbReference>
<dbReference type="HAMAP" id="MF_00092">
    <property type="entry name" value="MutS2"/>
    <property type="match status" value="1"/>
</dbReference>
<dbReference type="InterPro" id="IPR000432">
    <property type="entry name" value="DNA_mismatch_repair_MutS_C"/>
</dbReference>
<dbReference type="InterPro" id="IPR007696">
    <property type="entry name" value="DNA_mismatch_repair_MutS_core"/>
</dbReference>
<dbReference type="InterPro" id="IPR036187">
    <property type="entry name" value="DNA_mismatch_repair_MutS_sf"/>
</dbReference>
<dbReference type="InterPro" id="IPR046893">
    <property type="entry name" value="MSSS"/>
</dbReference>
<dbReference type="InterPro" id="IPR045076">
    <property type="entry name" value="MutS"/>
</dbReference>
<dbReference type="InterPro" id="IPR005747">
    <property type="entry name" value="MutS2"/>
</dbReference>
<dbReference type="InterPro" id="IPR027417">
    <property type="entry name" value="P-loop_NTPase"/>
</dbReference>
<dbReference type="InterPro" id="IPR002625">
    <property type="entry name" value="Smr_dom"/>
</dbReference>
<dbReference type="InterPro" id="IPR036063">
    <property type="entry name" value="Smr_dom_sf"/>
</dbReference>
<dbReference type="NCBIfam" id="TIGR01069">
    <property type="entry name" value="mutS2"/>
    <property type="match status" value="1"/>
</dbReference>
<dbReference type="PANTHER" id="PTHR48466:SF2">
    <property type="entry name" value="OS10G0509000 PROTEIN"/>
    <property type="match status" value="1"/>
</dbReference>
<dbReference type="PANTHER" id="PTHR48466">
    <property type="entry name" value="OS10G0509000 PROTEIN-RELATED"/>
    <property type="match status" value="1"/>
</dbReference>
<dbReference type="Pfam" id="PF20297">
    <property type="entry name" value="MSSS"/>
    <property type="match status" value="1"/>
</dbReference>
<dbReference type="Pfam" id="PF00488">
    <property type="entry name" value="MutS_V"/>
    <property type="match status" value="1"/>
</dbReference>
<dbReference type="Pfam" id="PF01713">
    <property type="entry name" value="Smr"/>
    <property type="match status" value="1"/>
</dbReference>
<dbReference type="PIRSF" id="PIRSF005814">
    <property type="entry name" value="MutS_YshD"/>
    <property type="match status" value="1"/>
</dbReference>
<dbReference type="SMART" id="SM00534">
    <property type="entry name" value="MUTSac"/>
    <property type="match status" value="1"/>
</dbReference>
<dbReference type="SMART" id="SM00533">
    <property type="entry name" value="MUTSd"/>
    <property type="match status" value="1"/>
</dbReference>
<dbReference type="SMART" id="SM00463">
    <property type="entry name" value="SMR"/>
    <property type="match status" value="1"/>
</dbReference>
<dbReference type="SUPFAM" id="SSF48334">
    <property type="entry name" value="DNA repair protein MutS, domain III"/>
    <property type="match status" value="1"/>
</dbReference>
<dbReference type="SUPFAM" id="SSF52540">
    <property type="entry name" value="P-loop containing nucleoside triphosphate hydrolases"/>
    <property type="match status" value="1"/>
</dbReference>
<dbReference type="SUPFAM" id="SSF160443">
    <property type="entry name" value="SMR domain-like"/>
    <property type="match status" value="1"/>
</dbReference>
<dbReference type="PROSITE" id="PS00486">
    <property type="entry name" value="DNA_MISMATCH_REPAIR_2"/>
    <property type="match status" value="1"/>
</dbReference>
<dbReference type="PROSITE" id="PS50828">
    <property type="entry name" value="SMR"/>
    <property type="match status" value="1"/>
</dbReference>